<proteinExistence type="inferred from homology"/>
<organism>
    <name type="scientific">Shigella boydii serotype 4 (strain Sb227)</name>
    <dbReference type="NCBI Taxonomy" id="300268"/>
    <lineage>
        <taxon>Bacteria</taxon>
        <taxon>Pseudomonadati</taxon>
        <taxon>Pseudomonadota</taxon>
        <taxon>Gammaproteobacteria</taxon>
        <taxon>Enterobacterales</taxon>
        <taxon>Enterobacteriaceae</taxon>
        <taxon>Shigella</taxon>
    </lineage>
</organism>
<comment type="function">
    <text evidence="1">Catalyzes the acyloin condensation reaction between C atoms 2 and 3 of pyruvate and glyceraldehyde 3-phosphate to yield 1-deoxy-D-xylulose-5-phosphate (DXP).</text>
</comment>
<comment type="catalytic activity">
    <reaction evidence="1">
        <text>D-glyceraldehyde 3-phosphate + pyruvate + H(+) = 1-deoxy-D-xylulose 5-phosphate + CO2</text>
        <dbReference type="Rhea" id="RHEA:12605"/>
        <dbReference type="ChEBI" id="CHEBI:15361"/>
        <dbReference type="ChEBI" id="CHEBI:15378"/>
        <dbReference type="ChEBI" id="CHEBI:16526"/>
        <dbReference type="ChEBI" id="CHEBI:57792"/>
        <dbReference type="ChEBI" id="CHEBI:59776"/>
        <dbReference type="EC" id="2.2.1.7"/>
    </reaction>
</comment>
<comment type="cofactor">
    <cofactor evidence="1">
        <name>Mg(2+)</name>
        <dbReference type="ChEBI" id="CHEBI:18420"/>
    </cofactor>
    <text evidence="1">Binds 1 Mg(2+) ion per subunit.</text>
</comment>
<comment type="cofactor">
    <cofactor evidence="1">
        <name>thiamine diphosphate</name>
        <dbReference type="ChEBI" id="CHEBI:58937"/>
    </cofactor>
    <text evidence="1">Binds 1 thiamine pyrophosphate per subunit.</text>
</comment>
<comment type="pathway">
    <text evidence="1">Metabolic intermediate biosynthesis; 1-deoxy-D-xylulose 5-phosphate biosynthesis; 1-deoxy-D-xylulose 5-phosphate from D-glyceraldehyde 3-phosphate and pyruvate: step 1/1.</text>
</comment>
<comment type="subunit">
    <text evidence="1">Homodimer.</text>
</comment>
<comment type="similarity">
    <text evidence="1">Belongs to the transketolase family. DXPS subfamily.</text>
</comment>
<evidence type="ECO:0000255" key="1">
    <source>
        <dbReference type="HAMAP-Rule" id="MF_00315"/>
    </source>
</evidence>
<dbReference type="EC" id="2.2.1.7" evidence="1"/>
<dbReference type="EMBL" id="CP000036">
    <property type="protein sequence ID" value="ABB65027.1"/>
    <property type="molecule type" value="Genomic_DNA"/>
</dbReference>
<dbReference type="RefSeq" id="WP_000006815.1">
    <property type="nucleotide sequence ID" value="NC_007613.1"/>
</dbReference>
<dbReference type="SMR" id="Q325I1"/>
<dbReference type="KEGG" id="sbo:SBO_0314"/>
<dbReference type="HOGENOM" id="CLU_009227_1_4_6"/>
<dbReference type="UniPathway" id="UPA00064">
    <property type="reaction ID" value="UER00091"/>
</dbReference>
<dbReference type="Proteomes" id="UP000007067">
    <property type="component" value="Chromosome"/>
</dbReference>
<dbReference type="GO" id="GO:0005829">
    <property type="term" value="C:cytosol"/>
    <property type="evidence" value="ECO:0007669"/>
    <property type="project" value="TreeGrafter"/>
</dbReference>
<dbReference type="GO" id="GO:0008661">
    <property type="term" value="F:1-deoxy-D-xylulose-5-phosphate synthase activity"/>
    <property type="evidence" value="ECO:0007669"/>
    <property type="project" value="UniProtKB-UniRule"/>
</dbReference>
<dbReference type="GO" id="GO:0000287">
    <property type="term" value="F:magnesium ion binding"/>
    <property type="evidence" value="ECO:0007669"/>
    <property type="project" value="UniProtKB-UniRule"/>
</dbReference>
<dbReference type="GO" id="GO:0030976">
    <property type="term" value="F:thiamine pyrophosphate binding"/>
    <property type="evidence" value="ECO:0007669"/>
    <property type="project" value="UniProtKB-UniRule"/>
</dbReference>
<dbReference type="GO" id="GO:0052865">
    <property type="term" value="P:1-deoxy-D-xylulose 5-phosphate biosynthetic process"/>
    <property type="evidence" value="ECO:0007669"/>
    <property type="project" value="UniProtKB-UniPathway"/>
</dbReference>
<dbReference type="GO" id="GO:0019288">
    <property type="term" value="P:isopentenyl diphosphate biosynthetic process, methylerythritol 4-phosphate pathway"/>
    <property type="evidence" value="ECO:0007669"/>
    <property type="project" value="TreeGrafter"/>
</dbReference>
<dbReference type="GO" id="GO:0016114">
    <property type="term" value="P:terpenoid biosynthetic process"/>
    <property type="evidence" value="ECO:0007669"/>
    <property type="project" value="UniProtKB-UniRule"/>
</dbReference>
<dbReference type="GO" id="GO:0009228">
    <property type="term" value="P:thiamine biosynthetic process"/>
    <property type="evidence" value="ECO:0007669"/>
    <property type="project" value="UniProtKB-UniRule"/>
</dbReference>
<dbReference type="CDD" id="cd02007">
    <property type="entry name" value="TPP_DXS"/>
    <property type="match status" value="1"/>
</dbReference>
<dbReference type="CDD" id="cd07033">
    <property type="entry name" value="TPP_PYR_DXS_TK_like"/>
    <property type="match status" value="1"/>
</dbReference>
<dbReference type="FunFam" id="3.40.50.920:FF:000002">
    <property type="entry name" value="1-deoxy-D-xylulose-5-phosphate synthase"/>
    <property type="match status" value="1"/>
</dbReference>
<dbReference type="FunFam" id="3.40.50.970:FF:000005">
    <property type="entry name" value="1-deoxy-D-xylulose-5-phosphate synthase"/>
    <property type="match status" value="1"/>
</dbReference>
<dbReference type="Gene3D" id="3.40.50.920">
    <property type="match status" value="1"/>
</dbReference>
<dbReference type="Gene3D" id="3.40.50.970">
    <property type="match status" value="2"/>
</dbReference>
<dbReference type="HAMAP" id="MF_00315">
    <property type="entry name" value="DXP_synth"/>
    <property type="match status" value="1"/>
</dbReference>
<dbReference type="InterPro" id="IPR005477">
    <property type="entry name" value="Dxylulose-5-P_synthase"/>
</dbReference>
<dbReference type="InterPro" id="IPR029061">
    <property type="entry name" value="THDP-binding"/>
</dbReference>
<dbReference type="InterPro" id="IPR009014">
    <property type="entry name" value="Transketo_C/PFOR_II"/>
</dbReference>
<dbReference type="InterPro" id="IPR005475">
    <property type="entry name" value="Transketolase-like_Pyr-bd"/>
</dbReference>
<dbReference type="InterPro" id="IPR020826">
    <property type="entry name" value="Transketolase_BS"/>
</dbReference>
<dbReference type="InterPro" id="IPR033248">
    <property type="entry name" value="Transketolase_C"/>
</dbReference>
<dbReference type="InterPro" id="IPR049557">
    <property type="entry name" value="Transketolase_CS"/>
</dbReference>
<dbReference type="NCBIfam" id="TIGR00204">
    <property type="entry name" value="dxs"/>
    <property type="match status" value="1"/>
</dbReference>
<dbReference type="NCBIfam" id="NF003933">
    <property type="entry name" value="PRK05444.2-2"/>
    <property type="match status" value="1"/>
</dbReference>
<dbReference type="PANTHER" id="PTHR43322">
    <property type="entry name" value="1-D-DEOXYXYLULOSE 5-PHOSPHATE SYNTHASE-RELATED"/>
    <property type="match status" value="1"/>
</dbReference>
<dbReference type="PANTHER" id="PTHR43322:SF5">
    <property type="entry name" value="1-DEOXY-D-XYLULOSE-5-PHOSPHATE SYNTHASE, CHLOROPLASTIC"/>
    <property type="match status" value="1"/>
</dbReference>
<dbReference type="Pfam" id="PF13292">
    <property type="entry name" value="DXP_synthase_N"/>
    <property type="match status" value="1"/>
</dbReference>
<dbReference type="Pfam" id="PF02779">
    <property type="entry name" value="Transket_pyr"/>
    <property type="match status" value="1"/>
</dbReference>
<dbReference type="Pfam" id="PF02780">
    <property type="entry name" value="Transketolase_C"/>
    <property type="match status" value="1"/>
</dbReference>
<dbReference type="SMART" id="SM00861">
    <property type="entry name" value="Transket_pyr"/>
    <property type="match status" value="1"/>
</dbReference>
<dbReference type="SUPFAM" id="SSF52518">
    <property type="entry name" value="Thiamin diphosphate-binding fold (THDP-binding)"/>
    <property type="match status" value="2"/>
</dbReference>
<dbReference type="SUPFAM" id="SSF52922">
    <property type="entry name" value="TK C-terminal domain-like"/>
    <property type="match status" value="1"/>
</dbReference>
<dbReference type="PROSITE" id="PS00801">
    <property type="entry name" value="TRANSKETOLASE_1"/>
    <property type="match status" value="1"/>
</dbReference>
<dbReference type="PROSITE" id="PS00802">
    <property type="entry name" value="TRANSKETOLASE_2"/>
    <property type="match status" value="1"/>
</dbReference>
<reference key="1">
    <citation type="journal article" date="2005" name="Nucleic Acids Res.">
        <title>Genome dynamics and diversity of Shigella species, the etiologic agents of bacillary dysentery.</title>
        <authorList>
            <person name="Yang F."/>
            <person name="Yang J."/>
            <person name="Zhang X."/>
            <person name="Chen L."/>
            <person name="Jiang Y."/>
            <person name="Yan Y."/>
            <person name="Tang X."/>
            <person name="Wang J."/>
            <person name="Xiong Z."/>
            <person name="Dong J."/>
            <person name="Xue Y."/>
            <person name="Zhu Y."/>
            <person name="Xu X."/>
            <person name="Sun L."/>
            <person name="Chen S."/>
            <person name="Nie H."/>
            <person name="Peng J."/>
            <person name="Xu J."/>
            <person name="Wang Y."/>
            <person name="Yuan Z."/>
            <person name="Wen Y."/>
            <person name="Yao Z."/>
            <person name="Shen Y."/>
            <person name="Qiang B."/>
            <person name="Hou Y."/>
            <person name="Yu J."/>
            <person name="Jin Q."/>
        </authorList>
    </citation>
    <scope>NUCLEOTIDE SEQUENCE [LARGE SCALE GENOMIC DNA]</scope>
    <source>
        <strain>Sb227</strain>
    </source>
</reference>
<sequence length="620" mass="67603">MSFDIAKYPTLALVDSTQELRLLPKESLPKLCDELRRYLLDSVSRSSGHFASGLGTVELTVALHYVYNTPFDQLIWDVGHQAYPHKILTGRRDKIGTIRQKGGLHPFPWRGESEYDVLSVGHSSTSISAGIGIAVAAEKEGKNRRTVCVIGDGAITAGMAFEAMNHAGDIRPDMLVVLNDNEMSISENVGALNNHLAQLLSGKLYSSLREGGKKVFSGVPPIKELLKRTEEHIKGMVVPGTLFEELGFNYIGPVDGHDVLGLITTLKNMRDLKGPQFLHIMTKKGRGYEPAEKDPITFHAVPKFDPSSGCLPKSSGGLPSYSKIFGDWLCETAAKDNKLMAITPAMREGSGMVEFSRKFPDRYFDVAIAEQHAVTFAAGLAIGGYKPIVAIYSTFLQRAYDQVLHDVAIQKLPVLFAIDRAGIVGADGQTHQGAFDLSYLRCIPEMVIMTPSDENECRQMLYTGYHYNDGPSAVRYPRGNAVGVELTPLEKLPIGKGIVKRRGEKLAILNFGTLMPEAAKVAESLNATLVDMRFVKPLDEALILEMAASHEALVTVEENAIMGGAGSGVNEVLMAHRKPVPVLNIGLPDFFIPQGTQEEMRAELGLDAAGMEAKIKAWLA</sequence>
<protein>
    <recommendedName>
        <fullName evidence="1">1-deoxy-D-xylulose-5-phosphate synthase</fullName>
        <ecNumber evidence="1">2.2.1.7</ecNumber>
    </recommendedName>
    <alternativeName>
        <fullName evidence="1">1-deoxyxylulose-5-phosphate synthase</fullName>
        <shortName evidence="1">DXP synthase</shortName>
        <shortName evidence="1">DXPS</shortName>
    </alternativeName>
</protein>
<keyword id="KW-0414">Isoprene biosynthesis</keyword>
<keyword id="KW-0460">Magnesium</keyword>
<keyword id="KW-0479">Metal-binding</keyword>
<keyword id="KW-0784">Thiamine biosynthesis</keyword>
<keyword id="KW-0786">Thiamine pyrophosphate</keyword>
<keyword id="KW-0808">Transferase</keyword>
<gene>
    <name evidence="1" type="primary">dxs</name>
    <name type="ordered locus">SBO_0314</name>
</gene>
<feature type="chain" id="PRO_0000256483" description="1-deoxy-D-xylulose-5-phosphate synthase">
    <location>
        <begin position="1"/>
        <end position="620"/>
    </location>
</feature>
<feature type="binding site" evidence="1">
    <location>
        <position position="80"/>
    </location>
    <ligand>
        <name>thiamine diphosphate</name>
        <dbReference type="ChEBI" id="CHEBI:58937"/>
    </ligand>
</feature>
<feature type="binding site" evidence="1">
    <location>
        <begin position="121"/>
        <end position="123"/>
    </location>
    <ligand>
        <name>thiamine diphosphate</name>
        <dbReference type="ChEBI" id="CHEBI:58937"/>
    </ligand>
</feature>
<feature type="binding site" evidence="1">
    <location>
        <position position="152"/>
    </location>
    <ligand>
        <name>Mg(2+)</name>
        <dbReference type="ChEBI" id="CHEBI:18420"/>
    </ligand>
</feature>
<feature type="binding site" evidence="1">
    <location>
        <begin position="153"/>
        <end position="154"/>
    </location>
    <ligand>
        <name>thiamine diphosphate</name>
        <dbReference type="ChEBI" id="CHEBI:58937"/>
    </ligand>
</feature>
<feature type="binding site" evidence="1">
    <location>
        <position position="181"/>
    </location>
    <ligand>
        <name>Mg(2+)</name>
        <dbReference type="ChEBI" id="CHEBI:18420"/>
    </ligand>
</feature>
<feature type="binding site" evidence="1">
    <location>
        <position position="181"/>
    </location>
    <ligand>
        <name>thiamine diphosphate</name>
        <dbReference type="ChEBI" id="CHEBI:58937"/>
    </ligand>
</feature>
<feature type="binding site" evidence="1">
    <location>
        <position position="288"/>
    </location>
    <ligand>
        <name>thiamine diphosphate</name>
        <dbReference type="ChEBI" id="CHEBI:58937"/>
    </ligand>
</feature>
<feature type="binding site" evidence="1">
    <location>
        <position position="370"/>
    </location>
    <ligand>
        <name>thiamine diphosphate</name>
        <dbReference type="ChEBI" id="CHEBI:58937"/>
    </ligand>
</feature>
<name>DXS_SHIBS</name>
<accession>Q325I1</accession>